<feature type="chain" id="PRO_1000060719" description="Putative membrane protein insertion efficiency factor">
    <location>
        <begin position="1"/>
        <end position="110"/>
    </location>
</feature>
<dbReference type="EMBL" id="CP000361">
    <property type="protein sequence ID" value="ABV67871.1"/>
    <property type="molecule type" value="Genomic_DNA"/>
</dbReference>
<dbReference type="STRING" id="367737.Abu_1623"/>
<dbReference type="GeneID" id="24303677"/>
<dbReference type="KEGG" id="abu:Abu_1623"/>
<dbReference type="eggNOG" id="COG0759">
    <property type="taxonomic scope" value="Bacteria"/>
</dbReference>
<dbReference type="HOGENOM" id="CLU_144811_4_0_7"/>
<dbReference type="Proteomes" id="UP000001136">
    <property type="component" value="Chromosome"/>
</dbReference>
<dbReference type="GO" id="GO:0005886">
    <property type="term" value="C:plasma membrane"/>
    <property type="evidence" value="ECO:0007669"/>
    <property type="project" value="UniProtKB-SubCell"/>
</dbReference>
<dbReference type="HAMAP" id="MF_00386">
    <property type="entry name" value="UPF0161_YidD"/>
    <property type="match status" value="1"/>
</dbReference>
<dbReference type="InterPro" id="IPR002696">
    <property type="entry name" value="Membr_insert_effic_factor_YidD"/>
</dbReference>
<dbReference type="NCBIfam" id="TIGR00278">
    <property type="entry name" value="membrane protein insertion efficiency factor YidD"/>
    <property type="match status" value="1"/>
</dbReference>
<dbReference type="PANTHER" id="PTHR33383">
    <property type="entry name" value="MEMBRANE PROTEIN INSERTION EFFICIENCY FACTOR-RELATED"/>
    <property type="match status" value="1"/>
</dbReference>
<dbReference type="PANTHER" id="PTHR33383:SF1">
    <property type="entry name" value="MEMBRANE PROTEIN INSERTION EFFICIENCY FACTOR-RELATED"/>
    <property type="match status" value="1"/>
</dbReference>
<dbReference type="Pfam" id="PF01809">
    <property type="entry name" value="YidD"/>
    <property type="match status" value="1"/>
</dbReference>
<dbReference type="SMART" id="SM01234">
    <property type="entry name" value="Haemolytic"/>
    <property type="match status" value="1"/>
</dbReference>
<evidence type="ECO:0000255" key="1">
    <source>
        <dbReference type="HAMAP-Rule" id="MF_00386"/>
    </source>
</evidence>
<organism>
    <name type="scientific">Aliarcobacter butzleri (strain RM4018)</name>
    <name type="common">Arcobacter butzleri</name>
    <dbReference type="NCBI Taxonomy" id="367737"/>
    <lineage>
        <taxon>Bacteria</taxon>
        <taxon>Pseudomonadati</taxon>
        <taxon>Campylobacterota</taxon>
        <taxon>Epsilonproteobacteria</taxon>
        <taxon>Campylobacterales</taxon>
        <taxon>Arcobacteraceae</taxon>
        <taxon>Aliarcobacter</taxon>
    </lineage>
</organism>
<proteinExistence type="inferred from homology"/>
<comment type="function">
    <text evidence="1">Could be involved in insertion of integral membrane proteins into the membrane.</text>
</comment>
<comment type="subcellular location">
    <subcellularLocation>
        <location evidence="1">Cell inner membrane</location>
        <topology evidence="1">Peripheral membrane protein</topology>
        <orientation evidence="1">Cytoplasmic side</orientation>
    </subcellularLocation>
</comment>
<comment type="similarity">
    <text evidence="1">Belongs to the UPF0161 family.</text>
</comment>
<name>YIDD_ALIB4</name>
<gene>
    <name type="ordered locus">Abu_1623</name>
</gene>
<protein>
    <recommendedName>
        <fullName evidence="1">Putative membrane protein insertion efficiency factor</fullName>
    </recommendedName>
</protein>
<sequence length="110" mass="13599">MKWLFKYLIRFYQKYLTILSFGSCRYYPTCSQYALWQLDNNTFFKAIYFTILRILKCNQLFDGGFDYPIIKLKKNQNINYNKIKIVYWYVPLKNGKYLVVKNREWKKNNE</sequence>
<keyword id="KW-0997">Cell inner membrane</keyword>
<keyword id="KW-1003">Cell membrane</keyword>
<keyword id="KW-0472">Membrane</keyword>
<keyword id="KW-1185">Reference proteome</keyword>
<reference key="1">
    <citation type="journal article" date="2007" name="PLoS ONE">
        <title>The complete genome sequence and analysis of the Epsilonproteobacterium Arcobacter butzleri.</title>
        <authorList>
            <person name="Miller W.G."/>
            <person name="Parker C.T."/>
            <person name="Rubenfield M."/>
            <person name="Mendz G.L."/>
            <person name="Woesten M.M.S.M."/>
            <person name="Ussery D.W."/>
            <person name="Stolz J.F."/>
            <person name="Binnewies T.T."/>
            <person name="Hallin P.F."/>
            <person name="Wang G."/>
            <person name="Malek J.A."/>
            <person name="Rogosin A."/>
            <person name="Stanker L.H."/>
            <person name="Mandrell R.E."/>
        </authorList>
    </citation>
    <scope>NUCLEOTIDE SEQUENCE [LARGE SCALE GENOMIC DNA]</scope>
    <source>
        <strain>RM4018</strain>
    </source>
</reference>
<accession>A8EV98</accession>